<keyword id="KW-0067">ATP-binding</keyword>
<keyword id="KW-0347">Helicase</keyword>
<keyword id="KW-0378">Hydrolase</keyword>
<keyword id="KW-0547">Nucleotide-binding</keyword>
<keyword id="KW-1185">Reference proteome</keyword>
<organismHost>
    <name type="scientific">Acanthamoeba polyphaga</name>
    <name type="common">Amoeba</name>
    <dbReference type="NCBI Taxonomy" id="5757"/>
</organismHost>
<accession>Q5UQ46</accession>
<sequence length="519" mass="60347">MANNIKTKITRFGYIVNKNLIDDETIKEIKSDLTVVPFKINNYAPKYIKNEGFPLYVENGNYIGIPKYYGFDKLGEPDIDKVSNYEYPVQDMTYTGTLRPHQQMVSDKIIKGMEEGGGGVLVMGCGSGKTNVAIYIACKFKLRTLFVVHKTFLRDQVIDRIKSNTNVKKVGIIQRKIVNYKHPFVVSMVQSLAKINYNDEIFKDFGMIIIDEVHHMGARNFSTVYQKISSKYMLGISAEYTRTDGMYKIINWYMGPILHLEEQKPNEMVIVKQFYYSTSNKERIKMKYINGDTNKPNRSKMITNLFYIKRRNRFILYLIQELFDMGKNILFLSGRLKQIDLLYELLNNDEFTHGNVGKYIGGMKESSLKKSAMKQIILGSYDMASEGLDIEGLNVVILGTPKTSIKQSVGRILRKEVYEEHPIVIDIVDVDNDTFKKQSKSRNNYFQKQKYNIQKYYISESLKQKYELWNDKEYIKKVLVEIPEIPDKQTQDMIKTNPNPKKKYQGPINIDELNFLEDD</sequence>
<comment type="catalytic activity">
    <reaction>
        <text>ATP + H2O = ADP + phosphate + H(+)</text>
        <dbReference type="Rhea" id="RHEA:13065"/>
        <dbReference type="ChEBI" id="CHEBI:15377"/>
        <dbReference type="ChEBI" id="CHEBI:15378"/>
        <dbReference type="ChEBI" id="CHEBI:30616"/>
        <dbReference type="ChEBI" id="CHEBI:43474"/>
        <dbReference type="ChEBI" id="CHEBI:456216"/>
        <dbReference type="EC" id="3.6.4.13"/>
    </reaction>
</comment>
<comment type="similarity">
    <text evidence="3">Belongs to the DEAD box helicase family. DEAH subfamily.</text>
</comment>
<proteinExistence type="inferred from homology"/>
<feature type="chain" id="PRO_0000253412" description="Putative ATP-dependent RNA helicase L396">
    <location>
        <begin position="1"/>
        <end position="519"/>
    </location>
</feature>
<feature type="domain" description="Helicase ATP-binding" evidence="1">
    <location>
        <begin position="110"/>
        <end position="258"/>
    </location>
</feature>
<feature type="domain" description="Helicase C-terminal" evidence="2">
    <location>
        <begin position="317"/>
        <end position="457"/>
    </location>
</feature>
<feature type="short sequence motif" description="DEAH box">
    <location>
        <begin position="211"/>
        <end position="214"/>
    </location>
</feature>
<feature type="binding site" evidence="1">
    <location>
        <begin position="123"/>
        <end position="130"/>
    </location>
    <ligand>
        <name>ATP</name>
        <dbReference type="ChEBI" id="CHEBI:30616"/>
    </ligand>
</feature>
<name>YL396_MIMIV</name>
<dbReference type="EC" id="3.6.4.13"/>
<dbReference type="EMBL" id="AY653733">
    <property type="protein sequence ID" value="AAV50665.1"/>
    <property type="molecule type" value="Genomic_DNA"/>
</dbReference>
<dbReference type="SMR" id="Q5UQ46"/>
<dbReference type="KEGG" id="vg:9925017"/>
<dbReference type="OrthoDB" id="4131at10239"/>
<dbReference type="Proteomes" id="UP000001134">
    <property type="component" value="Genome"/>
</dbReference>
<dbReference type="GO" id="GO:0005524">
    <property type="term" value="F:ATP binding"/>
    <property type="evidence" value="ECO:0007669"/>
    <property type="project" value="UniProtKB-KW"/>
</dbReference>
<dbReference type="GO" id="GO:0016887">
    <property type="term" value="F:ATP hydrolysis activity"/>
    <property type="evidence" value="ECO:0007669"/>
    <property type="project" value="RHEA"/>
</dbReference>
<dbReference type="GO" id="GO:0003677">
    <property type="term" value="F:DNA binding"/>
    <property type="evidence" value="ECO:0007669"/>
    <property type="project" value="InterPro"/>
</dbReference>
<dbReference type="GO" id="GO:0003724">
    <property type="term" value="F:RNA helicase activity"/>
    <property type="evidence" value="ECO:0007669"/>
    <property type="project" value="UniProtKB-EC"/>
</dbReference>
<dbReference type="CDD" id="cd17926">
    <property type="entry name" value="DEXHc_RE"/>
    <property type="match status" value="1"/>
</dbReference>
<dbReference type="CDD" id="cd18785">
    <property type="entry name" value="SF2_C"/>
    <property type="match status" value="1"/>
</dbReference>
<dbReference type="Gene3D" id="3.40.50.300">
    <property type="entry name" value="P-loop containing nucleotide triphosphate hydrolases"/>
    <property type="match status" value="2"/>
</dbReference>
<dbReference type="InterPro" id="IPR050615">
    <property type="entry name" value="ATP-dep_DNA_Helicase"/>
</dbReference>
<dbReference type="InterPro" id="IPR006935">
    <property type="entry name" value="Helicase/UvrB_N"/>
</dbReference>
<dbReference type="InterPro" id="IPR014001">
    <property type="entry name" value="Helicase_ATP-bd"/>
</dbReference>
<dbReference type="InterPro" id="IPR027417">
    <property type="entry name" value="P-loop_NTPase"/>
</dbReference>
<dbReference type="PANTHER" id="PTHR11274:SF0">
    <property type="entry name" value="GENERAL TRANSCRIPTION AND DNA REPAIR FACTOR IIH HELICASE SUBUNIT XPB"/>
    <property type="match status" value="1"/>
</dbReference>
<dbReference type="PANTHER" id="PTHR11274">
    <property type="entry name" value="RAD25/XP-B DNA REPAIR HELICASE"/>
    <property type="match status" value="1"/>
</dbReference>
<dbReference type="Pfam" id="PF04851">
    <property type="entry name" value="ResIII"/>
    <property type="match status" value="1"/>
</dbReference>
<dbReference type="SMART" id="SM00487">
    <property type="entry name" value="DEXDc"/>
    <property type="match status" value="1"/>
</dbReference>
<dbReference type="SUPFAM" id="SSF52540">
    <property type="entry name" value="P-loop containing nucleoside triphosphate hydrolases"/>
    <property type="match status" value="2"/>
</dbReference>
<dbReference type="PROSITE" id="PS51192">
    <property type="entry name" value="HELICASE_ATP_BIND_1"/>
    <property type="match status" value="1"/>
</dbReference>
<dbReference type="PROSITE" id="PS51194">
    <property type="entry name" value="HELICASE_CTER"/>
    <property type="match status" value="1"/>
</dbReference>
<protein>
    <recommendedName>
        <fullName>Putative ATP-dependent RNA helicase L396</fullName>
        <ecNumber>3.6.4.13</ecNumber>
    </recommendedName>
</protein>
<organism>
    <name type="scientific">Acanthamoeba polyphaga mimivirus</name>
    <name type="common">APMV</name>
    <dbReference type="NCBI Taxonomy" id="212035"/>
    <lineage>
        <taxon>Viruses</taxon>
        <taxon>Varidnaviria</taxon>
        <taxon>Bamfordvirae</taxon>
        <taxon>Nucleocytoviricota</taxon>
        <taxon>Megaviricetes</taxon>
        <taxon>Imitervirales</taxon>
        <taxon>Mimiviridae</taxon>
        <taxon>Megamimivirinae</taxon>
        <taxon>Mimivirus</taxon>
        <taxon>Mimivirus bradfordmassiliense</taxon>
    </lineage>
</organism>
<gene>
    <name type="ordered locus">MIMI_L396</name>
</gene>
<evidence type="ECO:0000255" key="1">
    <source>
        <dbReference type="PROSITE-ProRule" id="PRU00541"/>
    </source>
</evidence>
<evidence type="ECO:0000255" key="2">
    <source>
        <dbReference type="PROSITE-ProRule" id="PRU00542"/>
    </source>
</evidence>
<evidence type="ECO:0000305" key="3"/>
<reference key="1">
    <citation type="journal article" date="2004" name="Science">
        <title>The 1.2-megabase genome sequence of Mimivirus.</title>
        <authorList>
            <person name="Raoult D."/>
            <person name="Audic S."/>
            <person name="Robert C."/>
            <person name="Abergel C."/>
            <person name="Renesto P."/>
            <person name="Ogata H."/>
            <person name="La Scola B."/>
            <person name="Susan M."/>
            <person name="Claverie J.-M."/>
        </authorList>
    </citation>
    <scope>NUCLEOTIDE SEQUENCE [GENOMIC DNA]</scope>
    <source>
        <strain>Rowbotham-Bradford</strain>
    </source>
</reference>